<comment type="function">
    <text evidence="1">NDH shuttles electrons from NAD(P)H:plastoquinone, via FMN and iron-sulfur (Fe-S) centers, to quinones in the photosynthetic chain and possibly in a chloroplast respiratory chain. The immediate electron acceptor for the enzyme in this species is believed to be plastoquinone. Couples the redox reaction to proton translocation, and thus conserves the redox energy in a proton gradient.</text>
</comment>
<comment type="catalytic activity">
    <reaction evidence="1">
        <text>a plastoquinone + NADH + (n+1) H(+)(in) = a plastoquinol + NAD(+) + n H(+)(out)</text>
        <dbReference type="Rhea" id="RHEA:42608"/>
        <dbReference type="Rhea" id="RHEA-COMP:9561"/>
        <dbReference type="Rhea" id="RHEA-COMP:9562"/>
        <dbReference type="ChEBI" id="CHEBI:15378"/>
        <dbReference type="ChEBI" id="CHEBI:17757"/>
        <dbReference type="ChEBI" id="CHEBI:57540"/>
        <dbReference type="ChEBI" id="CHEBI:57945"/>
        <dbReference type="ChEBI" id="CHEBI:62192"/>
    </reaction>
</comment>
<comment type="catalytic activity">
    <reaction evidence="1">
        <text>a plastoquinone + NADPH + (n+1) H(+)(in) = a plastoquinol + NADP(+) + n H(+)(out)</text>
        <dbReference type="Rhea" id="RHEA:42612"/>
        <dbReference type="Rhea" id="RHEA-COMP:9561"/>
        <dbReference type="Rhea" id="RHEA-COMP:9562"/>
        <dbReference type="ChEBI" id="CHEBI:15378"/>
        <dbReference type="ChEBI" id="CHEBI:17757"/>
        <dbReference type="ChEBI" id="CHEBI:57783"/>
        <dbReference type="ChEBI" id="CHEBI:58349"/>
        <dbReference type="ChEBI" id="CHEBI:62192"/>
    </reaction>
</comment>
<comment type="subunit">
    <text evidence="1">NDH is composed of at least 16 different subunits, 5 of which are encoded in the nucleus.</text>
</comment>
<comment type="subcellular location">
    <subcellularLocation>
        <location evidence="1">Plastid</location>
        <location evidence="1">Chloroplast thylakoid membrane</location>
        <topology evidence="1">Peripheral membrane protein</topology>
        <orientation evidence="1">Stromal side</orientation>
    </subcellularLocation>
</comment>
<comment type="similarity">
    <text evidence="1">Belongs to the complex I 30 kDa subunit family.</text>
</comment>
<dbReference type="EC" id="7.1.1.-" evidence="1"/>
<dbReference type="EMBL" id="AP009369">
    <property type="protein sequence ID" value="BAF50026.1"/>
    <property type="molecule type" value="Genomic_DNA"/>
</dbReference>
<dbReference type="RefSeq" id="YP_001123202.1">
    <property type="nucleotide sequence ID" value="NC_009268.1"/>
</dbReference>
<dbReference type="SMR" id="A4QK21"/>
<dbReference type="GeneID" id="4962606"/>
<dbReference type="GO" id="GO:0009535">
    <property type="term" value="C:chloroplast thylakoid membrane"/>
    <property type="evidence" value="ECO:0007669"/>
    <property type="project" value="UniProtKB-SubCell"/>
</dbReference>
<dbReference type="GO" id="GO:0008137">
    <property type="term" value="F:NADH dehydrogenase (ubiquinone) activity"/>
    <property type="evidence" value="ECO:0007669"/>
    <property type="project" value="InterPro"/>
</dbReference>
<dbReference type="GO" id="GO:0048038">
    <property type="term" value="F:quinone binding"/>
    <property type="evidence" value="ECO:0007669"/>
    <property type="project" value="UniProtKB-KW"/>
</dbReference>
<dbReference type="GO" id="GO:0019684">
    <property type="term" value="P:photosynthesis, light reaction"/>
    <property type="evidence" value="ECO:0007669"/>
    <property type="project" value="UniProtKB-UniRule"/>
</dbReference>
<dbReference type="FunFam" id="3.30.460.80:FF:000004">
    <property type="entry name" value="NAD(P)H-quinone oxidoreductase subunit J, chloroplastic"/>
    <property type="match status" value="1"/>
</dbReference>
<dbReference type="Gene3D" id="3.30.460.80">
    <property type="entry name" value="NADH:ubiquinone oxidoreductase, 30kDa subunit"/>
    <property type="match status" value="1"/>
</dbReference>
<dbReference type="HAMAP" id="MF_01357">
    <property type="entry name" value="NDH1_NuoC"/>
    <property type="match status" value="1"/>
</dbReference>
<dbReference type="InterPro" id="IPR010218">
    <property type="entry name" value="NADH_DH_suC"/>
</dbReference>
<dbReference type="InterPro" id="IPR037232">
    <property type="entry name" value="NADH_quin_OxRdtase_su_C/D-like"/>
</dbReference>
<dbReference type="InterPro" id="IPR001268">
    <property type="entry name" value="NADH_UbQ_OxRdtase_30kDa_su"/>
</dbReference>
<dbReference type="InterPro" id="IPR020396">
    <property type="entry name" value="NADH_UbQ_OxRdtase_CS"/>
</dbReference>
<dbReference type="NCBIfam" id="NF009141">
    <property type="entry name" value="PRK12494.1"/>
    <property type="match status" value="1"/>
</dbReference>
<dbReference type="PANTHER" id="PTHR10884:SF14">
    <property type="entry name" value="NADH DEHYDROGENASE [UBIQUINONE] IRON-SULFUR PROTEIN 3, MITOCHONDRIAL"/>
    <property type="match status" value="1"/>
</dbReference>
<dbReference type="PANTHER" id="PTHR10884">
    <property type="entry name" value="NADH DEHYDROGENASE UBIQUINONE IRON-SULFUR PROTEIN 3"/>
    <property type="match status" value="1"/>
</dbReference>
<dbReference type="Pfam" id="PF00329">
    <property type="entry name" value="Complex1_30kDa"/>
    <property type="match status" value="1"/>
</dbReference>
<dbReference type="SUPFAM" id="SSF143243">
    <property type="entry name" value="Nqo5-like"/>
    <property type="match status" value="1"/>
</dbReference>
<dbReference type="PROSITE" id="PS00542">
    <property type="entry name" value="COMPLEX1_30K"/>
    <property type="match status" value="1"/>
</dbReference>
<gene>
    <name evidence="1" type="primary">ndhJ</name>
</gene>
<protein>
    <recommendedName>
        <fullName evidence="1">NAD(P)H-quinone oxidoreductase subunit J, chloroplastic</fullName>
        <ecNumber evidence="1">7.1.1.-</ecNumber>
    </recommendedName>
    <alternativeName>
        <fullName>NAD(P)H dehydrogenase subunit J</fullName>
    </alternativeName>
    <alternativeName>
        <fullName evidence="1">NADH-plastoquinone oxidoreductase subunit J</fullName>
    </alternativeName>
</protein>
<reference key="1">
    <citation type="submission" date="2007-03" db="EMBL/GenBank/DDBJ databases">
        <title>Sequencing analysis of Arabis hirsuta chloroplast DNA.</title>
        <authorList>
            <person name="Hosouchi T."/>
            <person name="Tsuruoka H."/>
            <person name="Kotani H."/>
        </authorList>
    </citation>
    <scope>NUCLEOTIDE SEQUENCE [LARGE SCALE GENOMIC DNA]</scope>
</reference>
<geneLocation type="chloroplast"/>
<feature type="chain" id="PRO_0000358242" description="NAD(P)H-quinone oxidoreductase subunit J, chloroplastic">
    <location>
        <begin position="1"/>
        <end position="158"/>
    </location>
</feature>
<accession>A4QK21</accession>
<sequence>MQGTLSVWLAKRGLIHRSLGFDYQGIETLQIKPEDWHSIAVILYVYGYNYLRSQCAYDVAPGGLLASVYHLTRIEYGVNQAEEVCIKVFMHRSNPRIPSVFWVWKSTDFQERESYDMLGITYDSHPRLKRILMPESWIGWPLRKDYIAPNFYEIQDAY</sequence>
<proteinExistence type="inferred from homology"/>
<organism>
    <name type="scientific">Arabis hirsuta</name>
    <name type="common">Hairy rock-cress</name>
    <name type="synonym">Turritis hirsuta</name>
    <dbReference type="NCBI Taxonomy" id="78191"/>
    <lineage>
        <taxon>Eukaryota</taxon>
        <taxon>Viridiplantae</taxon>
        <taxon>Streptophyta</taxon>
        <taxon>Embryophyta</taxon>
        <taxon>Tracheophyta</taxon>
        <taxon>Spermatophyta</taxon>
        <taxon>Magnoliopsida</taxon>
        <taxon>eudicotyledons</taxon>
        <taxon>Gunneridae</taxon>
        <taxon>Pentapetalae</taxon>
        <taxon>rosids</taxon>
        <taxon>malvids</taxon>
        <taxon>Brassicales</taxon>
        <taxon>Brassicaceae</taxon>
        <taxon>Arabideae</taxon>
        <taxon>Arabis</taxon>
    </lineage>
</organism>
<name>NDHJ_ARAHI</name>
<keyword id="KW-0150">Chloroplast</keyword>
<keyword id="KW-0472">Membrane</keyword>
<keyword id="KW-0520">NAD</keyword>
<keyword id="KW-0521">NADP</keyword>
<keyword id="KW-0934">Plastid</keyword>
<keyword id="KW-0618">Plastoquinone</keyword>
<keyword id="KW-0874">Quinone</keyword>
<keyword id="KW-0793">Thylakoid</keyword>
<keyword id="KW-1278">Translocase</keyword>
<keyword id="KW-0813">Transport</keyword>
<evidence type="ECO:0000255" key="1">
    <source>
        <dbReference type="HAMAP-Rule" id="MF_01357"/>
    </source>
</evidence>